<organism>
    <name type="scientific">Chlamydia trachomatis serovar A (strain ATCC VR-571B / DSM 19440 / HAR-13)</name>
    <dbReference type="NCBI Taxonomy" id="315277"/>
    <lineage>
        <taxon>Bacteria</taxon>
        <taxon>Pseudomonadati</taxon>
        <taxon>Chlamydiota</taxon>
        <taxon>Chlamydiia</taxon>
        <taxon>Chlamydiales</taxon>
        <taxon>Chlamydiaceae</taxon>
        <taxon>Chlamydia/Chlamydophila group</taxon>
        <taxon>Chlamydia</taxon>
    </lineage>
</organism>
<evidence type="ECO:0000255" key="1">
    <source>
        <dbReference type="HAMAP-Rule" id="MF_00093"/>
    </source>
</evidence>
<evidence type="ECO:0000256" key="2">
    <source>
        <dbReference type="SAM" id="MobiDB-lite"/>
    </source>
</evidence>
<gene>
    <name evidence="1" type="primary">prfA</name>
    <name type="ordered locus">CTA_0025</name>
</gene>
<feature type="chain" id="PRO_0000263250" description="Peptide chain release factor 1">
    <location>
        <begin position="1"/>
        <end position="359"/>
    </location>
</feature>
<feature type="region of interest" description="Disordered" evidence="2">
    <location>
        <begin position="287"/>
        <end position="312"/>
    </location>
</feature>
<feature type="modified residue" description="N5-methylglutamine" evidence="1">
    <location>
        <position position="235"/>
    </location>
</feature>
<comment type="function">
    <text evidence="1">Peptide chain release factor 1 directs the termination of translation in response to the peptide chain termination codons UAG and UAA.</text>
</comment>
<comment type="subcellular location">
    <subcellularLocation>
        <location evidence="1">Cytoplasm</location>
    </subcellularLocation>
</comment>
<comment type="PTM">
    <text evidence="1">Methylated by PrmC. Methylation increases the termination efficiency of RF1.</text>
</comment>
<comment type="similarity">
    <text evidence="1">Belongs to the prokaryotic/mitochondrial release factor family.</text>
</comment>
<protein>
    <recommendedName>
        <fullName evidence="1">Peptide chain release factor 1</fullName>
        <shortName evidence="1">RF-1</shortName>
    </recommendedName>
</protein>
<sequence>MEIKVLECLKRLEEVEKQISDPNIFSNPKEYSSLSKEHARLSEIKNAHESLVATKKILQDDKLALSTEKDPEIVAMLEEGVLVGEEAVERLSKQLENLLIPPDPDDDLSVIMELRAGTGGDEAALFVGDCVRMYHLYAASKGWQCEVLSTSESDLGGYKEYVMGISGASVKRFLQYEAGTHRVQRVPETETQGRVHTSAVTVAVLPEPAEDDEEVFIDEKDLRIDTFRSSGAGGQHVNVTDSAVRITHIPSGVVVTCQDERSQHKNKAKAMRVLKARIRDAEVQKRAQEASAMRSAQVGSGDRSERIRTYNFPQNRVTDHRIGLTLYNLDRVMEGELDMITTALVTHVHRQLFGHEETA</sequence>
<name>RF1_CHLTA</name>
<dbReference type="EMBL" id="CP000051">
    <property type="protein sequence ID" value="AAX50273.1"/>
    <property type="molecule type" value="Genomic_DNA"/>
</dbReference>
<dbReference type="RefSeq" id="WP_009871370.1">
    <property type="nucleotide sequence ID" value="NC_007429.1"/>
</dbReference>
<dbReference type="SMR" id="Q3KMZ9"/>
<dbReference type="KEGG" id="cta:CTA_0025"/>
<dbReference type="HOGENOM" id="CLU_036856_0_1_0"/>
<dbReference type="Proteomes" id="UP000002532">
    <property type="component" value="Chromosome"/>
</dbReference>
<dbReference type="GO" id="GO:0005737">
    <property type="term" value="C:cytoplasm"/>
    <property type="evidence" value="ECO:0007669"/>
    <property type="project" value="UniProtKB-SubCell"/>
</dbReference>
<dbReference type="GO" id="GO:0016149">
    <property type="term" value="F:translation release factor activity, codon specific"/>
    <property type="evidence" value="ECO:0007669"/>
    <property type="project" value="UniProtKB-UniRule"/>
</dbReference>
<dbReference type="FunFam" id="3.30.160.20:FF:000004">
    <property type="entry name" value="Peptide chain release factor 1"/>
    <property type="match status" value="1"/>
</dbReference>
<dbReference type="FunFam" id="3.30.70.1660:FF:000002">
    <property type="entry name" value="Peptide chain release factor 1"/>
    <property type="match status" value="1"/>
</dbReference>
<dbReference type="FunFam" id="3.30.70.1660:FF:000004">
    <property type="entry name" value="Peptide chain release factor 1"/>
    <property type="match status" value="1"/>
</dbReference>
<dbReference type="Gene3D" id="3.30.160.20">
    <property type="match status" value="1"/>
</dbReference>
<dbReference type="Gene3D" id="3.30.70.1660">
    <property type="match status" value="1"/>
</dbReference>
<dbReference type="Gene3D" id="6.10.140.1950">
    <property type="match status" value="1"/>
</dbReference>
<dbReference type="HAMAP" id="MF_00093">
    <property type="entry name" value="Rel_fac_1"/>
    <property type="match status" value="1"/>
</dbReference>
<dbReference type="InterPro" id="IPR005139">
    <property type="entry name" value="PCRF"/>
</dbReference>
<dbReference type="InterPro" id="IPR000352">
    <property type="entry name" value="Pep_chain_release_fac_I"/>
</dbReference>
<dbReference type="InterPro" id="IPR045853">
    <property type="entry name" value="Pep_chain_release_fac_I_sf"/>
</dbReference>
<dbReference type="InterPro" id="IPR050057">
    <property type="entry name" value="Prokaryotic/Mito_RF"/>
</dbReference>
<dbReference type="InterPro" id="IPR004373">
    <property type="entry name" value="RF-1"/>
</dbReference>
<dbReference type="NCBIfam" id="TIGR00019">
    <property type="entry name" value="prfA"/>
    <property type="match status" value="1"/>
</dbReference>
<dbReference type="NCBIfam" id="NF001859">
    <property type="entry name" value="PRK00591.1"/>
    <property type="match status" value="1"/>
</dbReference>
<dbReference type="PANTHER" id="PTHR43804">
    <property type="entry name" value="LD18447P"/>
    <property type="match status" value="1"/>
</dbReference>
<dbReference type="PANTHER" id="PTHR43804:SF7">
    <property type="entry name" value="LD18447P"/>
    <property type="match status" value="1"/>
</dbReference>
<dbReference type="Pfam" id="PF03462">
    <property type="entry name" value="PCRF"/>
    <property type="match status" value="1"/>
</dbReference>
<dbReference type="Pfam" id="PF00472">
    <property type="entry name" value="RF-1"/>
    <property type="match status" value="1"/>
</dbReference>
<dbReference type="SMART" id="SM00937">
    <property type="entry name" value="PCRF"/>
    <property type="match status" value="1"/>
</dbReference>
<dbReference type="SUPFAM" id="SSF75620">
    <property type="entry name" value="Release factor"/>
    <property type="match status" value="1"/>
</dbReference>
<dbReference type="PROSITE" id="PS00745">
    <property type="entry name" value="RF_PROK_I"/>
    <property type="match status" value="1"/>
</dbReference>
<reference key="1">
    <citation type="journal article" date="2005" name="Infect. Immun.">
        <title>Comparative genomic analysis of Chlamydia trachomatis oculotropic and genitotropic strains.</title>
        <authorList>
            <person name="Carlson J.H."/>
            <person name="Porcella S.F."/>
            <person name="McClarty G."/>
            <person name="Caldwell H.D."/>
        </authorList>
    </citation>
    <scope>NUCLEOTIDE SEQUENCE [LARGE SCALE GENOMIC DNA]</scope>
    <source>
        <strain>ATCC VR-571B / DSM 19440 / HAR-13</strain>
    </source>
</reference>
<accession>Q3KMZ9</accession>
<keyword id="KW-0963">Cytoplasm</keyword>
<keyword id="KW-0488">Methylation</keyword>
<keyword id="KW-0648">Protein biosynthesis</keyword>
<proteinExistence type="inferred from homology"/>